<feature type="chain" id="PRO_1000070695" description="Urease subunit alpha">
    <location>
        <begin position="1"/>
        <end position="570"/>
    </location>
</feature>
<feature type="domain" description="Urease" evidence="1">
    <location>
        <begin position="132"/>
        <end position="570"/>
    </location>
</feature>
<feature type="active site" description="Proton donor" evidence="1">
    <location>
        <position position="323"/>
    </location>
</feature>
<feature type="binding site" evidence="1">
    <location>
        <position position="137"/>
    </location>
    <ligand>
        <name>Ni(2+)</name>
        <dbReference type="ChEBI" id="CHEBI:49786"/>
        <label>1</label>
    </ligand>
</feature>
<feature type="binding site" evidence="1">
    <location>
        <position position="139"/>
    </location>
    <ligand>
        <name>Ni(2+)</name>
        <dbReference type="ChEBI" id="CHEBI:49786"/>
        <label>1</label>
    </ligand>
</feature>
<feature type="binding site" description="via carbamate group" evidence="1">
    <location>
        <position position="220"/>
    </location>
    <ligand>
        <name>Ni(2+)</name>
        <dbReference type="ChEBI" id="CHEBI:49786"/>
        <label>1</label>
    </ligand>
</feature>
<feature type="binding site" description="via carbamate group" evidence="1">
    <location>
        <position position="220"/>
    </location>
    <ligand>
        <name>Ni(2+)</name>
        <dbReference type="ChEBI" id="CHEBI:49786"/>
        <label>2</label>
    </ligand>
</feature>
<feature type="binding site" evidence="1">
    <location>
        <position position="222"/>
    </location>
    <ligand>
        <name>substrate</name>
    </ligand>
</feature>
<feature type="binding site" evidence="1">
    <location>
        <position position="249"/>
    </location>
    <ligand>
        <name>Ni(2+)</name>
        <dbReference type="ChEBI" id="CHEBI:49786"/>
        <label>2</label>
    </ligand>
</feature>
<feature type="binding site" evidence="1">
    <location>
        <position position="275"/>
    </location>
    <ligand>
        <name>Ni(2+)</name>
        <dbReference type="ChEBI" id="CHEBI:49786"/>
        <label>2</label>
    </ligand>
</feature>
<feature type="binding site" evidence="1">
    <location>
        <position position="363"/>
    </location>
    <ligand>
        <name>Ni(2+)</name>
        <dbReference type="ChEBI" id="CHEBI:49786"/>
        <label>1</label>
    </ligand>
</feature>
<feature type="modified residue" description="N6-carboxylysine" evidence="1">
    <location>
        <position position="220"/>
    </location>
</feature>
<sequence length="570" mass="60834">MPANIPRSDYAAMYGPTTGDRVRLADTDLIIEVERDLTGPYGEEVKFGGGKVIRDGMGQAQTTRAGGAVDTVITNALILDWTGIYKADVGLKDGRIHAIGKAGNPDTQPNVTIIVGPGTEVIAGEGRILTAGGFDSHIHYICPQQIEDALHSGLTTMLGGGTGPAHGTLATTCTPGAWHLGRMMQAADAFPMNLAFAGKGNASLPAAIEEQVNAGACALKLHEDWGTTPAAIDCCLGVADAMDVQVMIHTDTLNESGFVEHTVKAMKGRTIHAFHTEGAGGGHAPDIIKICGEEFVLPSSTNPTRPFTVNTIEEHLDMLMVCHHLDKSIPEDVAFAESRIRRETIAAEDILHDMGAFSIIASDSQAMGRVGEVIIRTWQTADKMKKQRGRLSEETGENDNFRVRRYVAKYTINPAIAHGIAHEIGSIEVGKRADLVLWNPAFFGVKPEMVLMGGTIACAQMGDPNASIPTPQPVYSRPMWGAYGRSVEHSAVTFVSEAAQAAGIGKTLGLAKQTLAVKGTRGIGKSALKLNTATPEIEVHPETYEVRANGELLTCQPAEELPLAQRYFLF</sequence>
<comment type="catalytic activity">
    <reaction evidence="1">
        <text>urea + 2 H2O + H(+) = hydrogencarbonate + 2 NH4(+)</text>
        <dbReference type="Rhea" id="RHEA:20557"/>
        <dbReference type="ChEBI" id="CHEBI:15377"/>
        <dbReference type="ChEBI" id="CHEBI:15378"/>
        <dbReference type="ChEBI" id="CHEBI:16199"/>
        <dbReference type="ChEBI" id="CHEBI:17544"/>
        <dbReference type="ChEBI" id="CHEBI:28938"/>
        <dbReference type="EC" id="3.5.1.5"/>
    </reaction>
</comment>
<comment type="cofactor">
    <cofactor evidence="1">
        <name>Ni cation</name>
        <dbReference type="ChEBI" id="CHEBI:25516"/>
    </cofactor>
    <text evidence="1">Binds 2 nickel ions per subunit.</text>
</comment>
<comment type="pathway">
    <text evidence="1">Nitrogen metabolism; urea degradation; CO(2) and NH(3) from urea (urease route): step 1/1.</text>
</comment>
<comment type="subunit">
    <text evidence="1">Heterotrimer of UreA (gamma), UreB (beta) and UreC (alpha) subunits. Three heterotrimers associate to form the active enzyme.</text>
</comment>
<comment type="subcellular location">
    <subcellularLocation>
        <location evidence="1">Cytoplasm</location>
    </subcellularLocation>
</comment>
<comment type="PTM">
    <text evidence="1">Carboxylation allows a single lysine to coordinate two nickel ions.</text>
</comment>
<comment type="similarity">
    <text evidence="1">Belongs to the metallo-dependent hydrolases superfamily. Urease alpha subunit family.</text>
</comment>
<keyword id="KW-0963">Cytoplasm</keyword>
<keyword id="KW-0378">Hydrolase</keyword>
<keyword id="KW-0479">Metal-binding</keyword>
<keyword id="KW-0533">Nickel</keyword>
<keyword id="KW-1185">Reference proteome</keyword>
<reference key="1">
    <citation type="submission" date="2006-05" db="EMBL/GenBank/DDBJ databases">
        <title>Complete sequence of chromosome of Silicibacter sp. TM1040.</title>
        <authorList>
            <consortium name="US DOE Joint Genome Institute"/>
            <person name="Copeland A."/>
            <person name="Lucas S."/>
            <person name="Lapidus A."/>
            <person name="Barry K."/>
            <person name="Detter J.C."/>
            <person name="Glavina del Rio T."/>
            <person name="Hammon N."/>
            <person name="Israni S."/>
            <person name="Dalin E."/>
            <person name="Tice H."/>
            <person name="Pitluck S."/>
            <person name="Brettin T."/>
            <person name="Bruce D."/>
            <person name="Han C."/>
            <person name="Tapia R."/>
            <person name="Goodwin L."/>
            <person name="Thompson L.S."/>
            <person name="Gilna P."/>
            <person name="Schmutz J."/>
            <person name="Larimer F."/>
            <person name="Land M."/>
            <person name="Hauser L."/>
            <person name="Kyrpides N."/>
            <person name="Kim E."/>
            <person name="Belas R."/>
            <person name="Moran M.A."/>
            <person name="Buchan A."/>
            <person name="Gonzalez J.M."/>
            <person name="Schell M.A."/>
            <person name="Sun F."/>
            <person name="Richardson P."/>
        </authorList>
    </citation>
    <scope>NUCLEOTIDE SEQUENCE [LARGE SCALE GENOMIC DNA]</scope>
    <source>
        <strain>TM1040</strain>
    </source>
</reference>
<organism>
    <name type="scientific">Ruegeria sp. (strain TM1040)</name>
    <name type="common">Silicibacter sp.</name>
    <dbReference type="NCBI Taxonomy" id="292414"/>
    <lineage>
        <taxon>Bacteria</taxon>
        <taxon>Pseudomonadati</taxon>
        <taxon>Pseudomonadota</taxon>
        <taxon>Alphaproteobacteria</taxon>
        <taxon>Rhodobacterales</taxon>
        <taxon>Roseobacteraceae</taxon>
        <taxon>Ruegeria</taxon>
    </lineage>
</organism>
<gene>
    <name evidence="1" type="primary">ureC</name>
    <name type="ordered locus">TM1040_0385</name>
</gene>
<evidence type="ECO:0000255" key="1">
    <source>
        <dbReference type="HAMAP-Rule" id="MF_01953"/>
    </source>
</evidence>
<accession>Q1GJP8</accession>
<proteinExistence type="inferred from homology"/>
<protein>
    <recommendedName>
        <fullName evidence="1">Urease subunit alpha</fullName>
        <ecNumber evidence="1">3.5.1.5</ecNumber>
    </recommendedName>
    <alternativeName>
        <fullName evidence="1">Urea amidohydrolase subunit alpha</fullName>
    </alternativeName>
</protein>
<name>URE1_RUEST</name>
<dbReference type="EC" id="3.5.1.5" evidence="1"/>
<dbReference type="EMBL" id="CP000377">
    <property type="protein sequence ID" value="ABF63118.1"/>
    <property type="molecule type" value="Genomic_DNA"/>
</dbReference>
<dbReference type="RefSeq" id="WP_011537733.1">
    <property type="nucleotide sequence ID" value="NC_008044.1"/>
</dbReference>
<dbReference type="SMR" id="Q1GJP8"/>
<dbReference type="STRING" id="292414.TM1040_0385"/>
<dbReference type="MEROPS" id="M38.982"/>
<dbReference type="KEGG" id="sit:TM1040_0385"/>
<dbReference type="eggNOG" id="COG0804">
    <property type="taxonomic scope" value="Bacteria"/>
</dbReference>
<dbReference type="HOGENOM" id="CLU_000980_0_0_5"/>
<dbReference type="OrthoDB" id="9802793at2"/>
<dbReference type="UniPathway" id="UPA00258">
    <property type="reaction ID" value="UER00370"/>
</dbReference>
<dbReference type="Proteomes" id="UP000000636">
    <property type="component" value="Chromosome"/>
</dbReference>
<dbReference type="GO" id="GO:0005737">
    <property type="term" value="C:cytoplasm"/>
    <property type="evidence" value="ECO:0007669"/>
    <property type="project" value="UniProtKB-SubCell"/>
</dbReference>
<dbReference type="GO" id="GO:0016151">
    <property type="term" value="F:nickel cation binding"/>
    <property type="evidence" value="ECO:0007669"/>
    <property type="project" value="UniProtKB-UniRule"/>
</dbReference>
<dbReference type="GO" id="GO:0009039">
    <property type="term" value="F:urease activity"/>
    <property type="evidence" value="ECO:0007669"/>
    <property type="project" value="UniProtKB-UniRule"/>
</dbReference>
<dbReference type="GO" id="GO:0043419">
    <property type="term" value="P:urea catabolic process"/>
    <property type="evidence" value="ECO:0007669"/>
    <property type="project" value="UniProtKB-UniRule"/>
</dbReference>
<dbReference type="CDD" id="cd00375">
    <property type="entry name" value="Urease_alpha"/>
    <property type="match status" value="1"/>
</dbReference>
<dbReference type="Gene3D" id="3.20.20.140">
    <property type="entry name" value="Metal-dependent hydrolases"/>
    <property type="match status" value="1"/>
</dbReference>
<dbReference type="Gene3D" id="2.30.40.10">
    <property type="entry name" value="Urease, subunit C, domain 1"/>
    <property type="match status" value="1"/>
</dbReference>
<dbReference type="HAMAP" id="MF_01953">
    <property type="entry name" value="Urease_alpha"/>
    <property type="match status" value="1"/>
</dbReference>
<dbReference type="InterPro" id="IPR006680">
    <property type="entry name" value="Amidohydro-rel"/>
</dbReference>
<dbReference type="InterPro" id="IPR011059">
    <property type="entry name" value="Metal-dep_hydrolase_composite"/>
</dbReference>
<dbReference type="InterPro" id="IPR032466">
    <property type="entry name" value="Metal_Hydrolase"/>
</dbReference>
<dbReference type="InterPro" id="IPR011612">
    <property type="entry name" value="Urease_alpha_N_dom"/>
</dbReference>
<dbReference type="InterPro" id="IPR050112">
    <property type="entry name" value="Urease_alpha_subunit"/>
</dbReference>
<dbReference type="InterPro" id="IPR017950">
    <property type="entry name" value="Urease_AS"/>
</dbReference>
<dbReference type="InterPro" id="IPR005848">
    <property type="entry name" value="Urease_asu"/>
</dbReference>
<dbReference type="InterPro" id="IPR017951">
    <property type="entry name" value="Urease_asu_c"/>
</dbReference>
<dbReference type="InterPro" id="IPR029754">
    <property type="entry name" value="Urease_Ni-bd"/>
</dbReference>
<dbReference type="NCBIfam" id="NF009685">
    <property type="entry name" value="PRK13206.1"/>
    <property type="match status" value="1"/>
</dbReference>
<dbReference type="NCBIfam" id="NF009686">
    <property type="entry name" value="PRK13207.1"/>
    <property type="match status" value="1"/>
</dbReference>
<dbReference type="NCBIfam" id="TIGR01792">
    <property type="entry name" value="urease_alph"/>
    <property type="match status" value="1"/>
</dbReference>
<dbReference type="PANTHER" id="PTHR43440">
    <property type="entry name" value="UREASE"/>
    <property type="match status" value="1"/>
</dbReference>
<dbReference type="PANTHER" id="PTHR43440:SF1">
    <property type="entry name" value="UREASE"/>
    <property type="match status" value="1"/>
</dbReference>
<dbReference type="Pfam" id="PF01979">
    <property type="entry name" value="Amidohydro_1"/>
    <property type="match status" value="1"/>
</dbReference>
<dbReference type="Pfam" id="PF00449">
    <property type="entry name" value="Urease_alpha"/>
    <property type="match status" value="1"/>
</dbReference>
<dbReference type="PRINTS" id="PR01752">
    <property type="entry name" value="UREASE"/>
</dbReference>
<dbReference type="SUPFAM" id="SSF51338">
    <property type="entry name" value="Composite domain of metallo-dependent hydrolases"/>
    <property type="match status" value="2"/>
</dbReference>
<dbReference type="SUPFAM" id="SSF51556">
    <property type="entry name" value="Metallo-dependent hydrolases"/>
    <property type="match status" value="1"/>
</dbReference>
<dbReference type="PROSITE" id="PS01120">
    <property type="entry name" value="UREASE_1"/>
    <property type="match status" value="1"/>
</dbReference>
<dbReference type="PROSITE" id="PS00145">
    <property type="entry name" value="UREASE_2"/>
    <property type="match status" value="1"/>
</dbReference>
<dbReference type="PROSITE" id="PS51368">
    <property type="entry name" value="UREASE_3"/>
    <property type="match status" value="1"/>
</dbReference>